<protein>
    <recommendedName>
        <fullName evidence="3">Alpha-N-acetylneuraminide alpha-2,8-sialyltransferase</fullName>
        <ecNumber evidence="3">2.4.3.8</ecNumber>
    </recommendedName>
    <alternativeName>
        <fullName>Alpha-2,8-sialyltransferase 8A</fullName>
    </alternativeName>
    <alternativeName>
        <fullName>Ganglioside GD3 synthase</fullName>
    </alternativeName>
    <alternativeName>
        <fullName>Ganglioside GT3 synthase</fullName>
    </alternativeName>
    <alternativeName>
        <fullName>Sialyltransferase 8A</fullName>
        <shortName>SIAT8-A</shortName>
    </alternativeName>
    <alternativeName>
        <fullName>Sialyltransferase St8Sia I</fullName>
        <shortName>ST8SiaI</shortName>
    </alternativeName>
</protein>
<proteinExistence type="evidence at transcript level"/>
<sequence>MSPCGRARRHTSRGAMAVLAWKFPRTRLPVGASALCVVVLCWLYVFPVYRLPDEKEIVQGVLQQGTAWRRNRTAAGIFRKQMEDCCDPAHLFAMTKMNAPMGKSLWYDGEFLYSFTIDNSTYSLFPQATPFQLPLKKCAVVGNGGILKKSGCGRQIDEADFVMRCNLPPLSSEYTKDVGSKSHLVTANPSIIRQRFQNLLWSRKTFVDHMKVYNHSYIYMPAFSMKTGTEPSLRVYYTLSDVGANQTVLFANPNFLRSIGKFWKSRGIHAKRLSTGLFLVSAALGLCEEVAIYGFWPFSVNMHEQPISHHYYDNVLPFSGFHAMPEEFLQLWYLHKIGALRMQLDPCEDNSLQPTS</sequence>
<dbReference type="EC" id="2.4.3.8" evidence="3"/>
<dbReference type="EMBL" id="AJ699418">
    <property type="protein sequence ID" value="CAG27880.1"/>
    <property type="molecule type" value="mRNA"/>
</dbReference>
<dbReference type="RefSeq" id="NP_001027470.1">
    <property type="nucleotide sequence ID" value="NM_001032299.1"/>
</dbReference>
<dbReference type="SMR" id="Q6ZXD2"/>
<dbReference type="FunCoup" id="Q6ZXD2">
    <property type="interactions" value="315"/>
</dbReference>
<dbReference type="STRING" id="9913.ENSBTAP00000067376"/>
<dbReference type="CAZy" id="GT29">
    <property type="family name" value="Glycosyltransferase Family 29"/>
</dbReference>
<dbReference type="GlyCosmos" id="Q6ZXD2">
    <property type="glycosylation" value="4 sites, No reported glycans"/>
</dbReference>
<dbReference type="GlyGen" id="Q6ZXD2">
    <property type="glycosylation" value="4 sites"/>
</dbReference>
<dbReference type="PaxDb" id="9913-ENSBTAP00000000780"/>
<dbReference type="GeneID" id="282352"/>
<dbReference type="KEGG" id="bta:282352"/>
<dbReference type="CTD" id="6489"/>
<dbReference type="eggNOG" id="KOG2692">
    <property type="taxonomic scope" value="Eukaryota"/>
</dbReference>
<dbReference type="InParanoid" id="Q6ZXD2"/>
<dbReference type="OrthoDB" id="10264956at2759"/>
<dbReference type="UniPathway" id="UPA00222"/>
<dbReference type="UniPathway" id="UPA00378"/>
<dbReference type="Proteomes" id="UP000009136">
    <property type="component" value="Unplaced"/>
</dbReference>
<dbReference type="GO" id="GO:0000139">
    <property type="term" value="C:Golgi membrane"/>
    <property type="evidence" value="ECO:0007669"/>
    <property type="project" value="UniProtKB-SubCell"/>
</dbReference>
<dbReference type="GO" id="GO:0003828">
    <property type="term" value="F:alpha-N-acetylneuraminate alpha-2,8-sialyltransferase activity"/>
    <property type="evidence" value="ECO:0000250"/>
    <property type="project" value="UniProtKB"/>
</dbReference>
<dbReference type="GO" id="GO:0006491">
    <property type="term" value="P:N-glycan processing"/>
    <property type="evidence" value="ECO:0000318"/>
    <property type="project" value="GO_Central"/>
</dbReference>
<dbReference type="GO" id="GO:0009311">
    <property type="term" value="P:oligosaccharide metabolic process"/>
    <property type="evidence" value="ECO:0000318"/>
    <property type="project" value="GO_Central"/>
</dbReference>
<dbReference type="GO" id="GO:0006486">
    <property type="term" value="P:protein glycosylation"/>
    <property type="evidence" value="ECO:0000318"/>
    <property type="project" value="GO_Central"/>
</dbReference>
<dbReference type="GO" id="GO:0006665">
    <property type="term" value="P:sphingolipid metabolic process"/>
    <property type="evidence" value="ECO:0007669"/>
    <property type="project" value="UniProtKB-UniPathway"/>
</dbReference>
<dbReference type="CDD" id="cd23989">
    <property type="entry name" value="GT29_ST8SIA1"/>
    <property type="match status" value="1"/>
</dbReference>
<dbReference type="FunFam" id="3.90.1480.20:FF:000014">
    <property type="entry name" value="Alpha-N-acetylneuraminide alpha-2,8-sialyltransferase"/>
    <property type="match status" value="1"/>
</dbReference>
<dbReference type="Gene3D" id="3.90.1480.20">
    <property type="entry name" value="Glycosyl transferase family 29"/>
    <property type="match status" value="1"/>
</dbReference>
<dbReference type="InterPro" id="IPR001675">
    <property type="entry name" value="Glyco_trans_29"/>
</dbReference>
<dbReference type="InterPro" id="IPR050943">
    <property type="entry name" value="Glycosyltr_29_Sialyltrsf"/>
</dbReference>
<dbReference type="InterPro" id="IPR038578">
    <property type="entry name" value="GT29-like_sf"/>
</dbReference>
<dbReference type="InterPro" id="IPR012163">
    <property type="entry name" value="Sialyl_trans"/>
</dbReference>
<dbReference type="PANTHER" id="PTHR11987">
    <property type="entry name" value="ALPHA-2,8-SIALYLTRANSFERASE"/>
    <property type="match status" value="1"/>
</dbReference>
<dbReference type="PANTHER" id="PTHR11987:SF3">
    <property type="entry name" value="ALPHA-N-ACETYLNEURAMINIDE ALPHA-2,8-SIALYLTRANSFERASE"/>
    <property type="match status" value="1"/>
</dbReference>
<dbReference type="Pfam" id="PF00777">
    <property type="entry name" value="Glyco_transf_29"/>
    <property type="match status" value="1"/>
</dbReference>
<dbReference type="PIRSF" id="PIRSF005557">
    <property type="entry name" value="Sialyl_trans"/>
    <property type="match status" value="1"/>
</dbReference>
<organism>
    <name type="scientific">Bos taurus</name>
    <name type="common">Bovine</name>
    <dbReference type="NCBI Taxonomy" id="9913"/>
    <lineage>
        <taxon>Eukaryota</taxon>
        <taxon>Metazoa</taxon>
        <taxon>Chordata</taxon>
        <taxon>Craniata</taxon>
        <taxon>Vertebrata</taxon>
        <taxon>Euteleostomi</taxon>
        <taxon>Mammalia</taxon>
        <taxon>Eutheria</taxon>
        <taxon>Laurasiatheria</taxon>
        <taxon>Artiodactyla</taxon>
        <taxon>Ruminantia</taxon>
        <taxon>Pecora</taxon>
        <taxon>Bovidae</taxon>
        <taxon>Bovinae</taxon>
        <taxon>Bos</taxon>
    </lineage>
</organism>
<name>SIA8A_BOVIN</name>
<comment type="function">
    <text evidence="3">Catalyzes the addition of sialic acid in alpha 2,8-linkage to the sialic acid moiety of the ganglioside GM3 to form ganglioside GD3; gangliosides are a subfamily of complex glycosphingolipds that contain one or more residues of sialic acid (By similarity). Can catalyze the addition of a second alpha-2,8- sialic acid to GD3 to form GT3 (By similarity). Can use GM1b, GD1a and GT1b as acceptor substrates to synthesize GD1c, GT1a and GQ1b respectively (By similarity).</text>
</comment>
<comment type="catalytic activity">
    <reaction evidence="3">
        <text>an N-acetyl-alpha-neuraminyl-(2-&gt;3)-beta-D-galactosyl derivative + CMP-N-acetyl-beta-neuraminate = an N-acetyl-alpha-neuraminyl-(2-&gt;8)-N-acetyl-alpha-neuraminyl-(2-&gt;3)-beta-D-galactosyl derivative + CMP + H(+)</text>
        <dbReference type="Rhea" id="RHEA:19313"/>
        <dbReference type="ChEBI" id="CHEBI:15378"/>
        <dbReference type="ChEBI" id="CHEBI:57812"/>
        <dbReference type="ChEBI" id="CHEBI:60377"/>
        <dbReference type="ChEBI" id="CHEBI:140308"/>
        <dbReference type="ChEBI" id="CHEBI:140309"/>
        <dbReference type="EC" id="2.4.3.8"/>
    </reaction>
</comment>
<comment type="catalytic activity">
    <reaction evidence="3">
        <text>a ganglioside GM3 (d18:1(4E)) + CMP-N-acetyl-beta-neuraminate = a ganglioside GD3 (d18:1(4E)) + CMP + H(+)</text>
        <dbReference type="Rhea" id="RHEA:41760"/>
        <dbReference type="ChEBI" id="CHEBI:15378"/>
        <dbReference type="ChEBI" id="CHEBI:57812"/>
        <dbReference type="ChEBI" id="CHEBI:60065"/>
        <dbReference type="ChEBI" id="CHEBI:60377"/>
        <dbReference type="ChEBI" id="CHEBI:78436"/>
    </reaction>
    <physiologicalReaction direction="left-to-right" evidence="3">
        <dbReference type="Rhea" id="RHEA:41761"/>
    </physiologicalReaction>
</comment>
<comment type="catalytic activity">
    <reaction evidence="3">
        <text>a ganglioside GD3 (d18:1(4E)) + CMP-N-acetyl-beta-neuraminate = a ganglioside GT3 (d18:1(4E)) + CMP + H(+)</text>
        <dbReference type="Rhea" id="RHEA:41764"/>
        <dbReference type="ChEBI" id="CHEBI:15378"/>
        <dbReference type="ChEBI" id="CHEBI:57812"/>
        <dbReference type="ChEBI" id="CHEBI:60377"/>
        <dbReference type="ChEBI" id="CHEBI:78436"/>
        <dbReference type="ChEBI" id="CHEBI:78438"/>
    </reaction>
    <physiologicalReaction direction="left-to-right" evidence="3">
        <dbReference type="Rhea" id="RHEA:41765"/>
    </physiologicalReaction>
</comment>
<comment type="catalytic activity">
    <reaction evidence="3">
        <text>a ganglioside GD1a (d18:1(4E)) + CMP-N-acetyl-beta-neuraminate = a ganglioside GT1a (d18:1(4E)) + CMP + H(+)</text>
        <dbReference type="Rhea" id="RHEA:41768"/>
        <dbReference type="ChEBI" id="CHEBI:15378"/>
        <dbReference type="ChEBI" id="CHEBI:57812"/>
        <dbReference type="ChEBI" id="CHEBI:60377"/>
        <dbReference type="ChEBI" id="CHEBI:78445"/>
        <dbReference type="ChEBI" id="CHEBI:78447"/>
    </reaction>
    <physiologicalReaction direction="left-to-right" evidence="3">
        <dbReference type="Rhea" id="RHEA:41769"/>
    </physiologicalReaction>
</comment>
<comment type="catalytic activity">
    <reaction evidence="3">
        <text>a ganglioside GT1b (d18:1(4E)) + CMP-N-acetyl-beta-neuraminate = a ganglioside GQ1b (d18:1(4E)) + CMP + H(+)</text>
        <dbReference type="Rhea" id="RHEA:41772"/>
        <dbReference type="ChEBI" id="CHEBI:15378"/>
        <dbReference type="ChEBI" id="CHEBI:57812"/>
        <dbReference type="ChEBI" id="CHEBI:60377"/>
        <dbReference type="ChEBI" id="CHEBI:78452"/>
        <dbReference type="ChEBI" id="CHEBI:78455"/>
    </reaction>
    <physiologicalReaction direction="left-to-right" evidence="3">
        <dbReference type="Rhea" id="RHEA:41773"/>
    </physiologicalReaction>
</comment>
<comment type="catalytic activity">
    <reaction evidence="3">
        <text>a ganglioside GM1b (d18:1(4E)) + CMP-N-acetyl-beta-neuraminate = a ganglioside GD1c (d18:1(4E)) + CMP + H(+)</text>
        <dbReference type="Rhea" id="RHEA:47576"/>
        <dbReference type="ChEBI" id="CHEBI:15378"/>
        <dbReference type="ChEBI" id="CHEBI:57812"/>
        <dbReference type="ChEBI" id="CHEBI:60377"/>
        <dbReference type="ChEBI" id="CHEBI:78568"/>
        <dbReference type="ChEBI" id="CHEBI:87787"/>
    </reaction>
    <physiologicalReaction direction="left-to-right" evidence="3">
        <dbReference type="Rhea" id="RHEA:47577"/>
    </physiologicalReaction>
</comment>
<comment type="catalytic activity">
    <reaction evidence="3">
        <text>a ganglioside GD3 + CMP-N-acetyl-beta-neuraminate = a ganglioside GT3 + CMP + H(+)</text>
        <dbReference type="Rhea" id="RHEA:77295"/>
        <dbReference type="ChEBI" id="CHEBI:15378"/>
        <dbReference type="ChEBI" id="CHEBI:57812"/>
        <dbReference type="ChEBI" id="CHEBI:60377"/>
        <dbReference type="ChEBI" id="CHEBI:79214"/>
        <dbReference type="ChEBI" id="CHEBI:79216"/>
    </reaction>
    <physiologicalReaction direction="left-to-right" evidence="3">
        <dbReference type="Rhea" id="RHEA:77296"/>
    </physiologicalReaction>
</comment>
<comment type="catalytic activity">
    <reaction evidence="3">
        <text>[alpha-N-acetylneuraminyl-(2-&gt;8)](n)-alpha-N-acetylneuraminyl-(2-&gt;8)-alpha-N-acetylneuraminyl-(2-&gt;3)-beta-D-galactosyl-(1-&gt;4)-beta-D-glucosyl-(1&lt;-&gt;1)-ceramide + CMP-N-acetyl-beta-neuraminate = [alpha-N-acetylneuraminyl-(2-&gt;8)](n+1)-alpha-N-acetylneuraminyl-(2-&gt;8)-alpha-N-acetylneuraminyl-(2-&gt;3)-beta-D-galactosyl-(1-&gt;4)-beta-D-glucosyl-(1&lt;-&gt;1)-ceramide + CMP + H(+)</text>
        <dbReference type="Rhea" id="RHEA:77371"/>
        <dbReference type="Rhea" id="RHEA-COMP:18881"/>
        <dbReference type="Rhea" id="RHEA-COMP:18935"/>
        <dbReference type="ChEBI" id="CHEBI:15378"/>
        <dbReference type="ChEBI" id="CHEBI:57812"/>
        <dbReference type="ChEBI" id="CHEBI:60377"/>
        <dbReference type="ChEBI" id="CHEBI:197322"/>
    </reaction>
    <physiologicalReaction direction="left-to-right" evidence="3">
        <dbReference type="Rhea" id="RHEA:77372"/>
    </physiologicalReaction>
</comment>
<comment type="pathway">
    <text>Protein modification; protein glycosylation.</text>
</comment>
<comment type="pathway">
    <text>Lipid metabolism; sphingolipid metabolism.</text>
</comment>
<comment type="subcellular location">
    <subcellularLocation>
        <location evidence="5">Golgi apparatus membrane</location>
        <topology evidence="5">Single-pass type II membrane protein</topology>
    </subcellularLocation>
</comment>
<comment type="similarity">
    <text evidence="5">Belongs to the glycosyltransferase 29 family.</text>
</comment>
<keyword id="KW-1015">Disulfide bond</keyword>
<keyword id="KW-0325">Glycoprotein</keyword>
<keyword id="KW-0328">Glycosyltransferase</keyword>
<keyword id="KW-0333">Golgi apparatus</keyword>
<keyword id="KW-0444">Lipid biosynthesis</keyword>
<keyword id="KW-0443">Lipid metabolism</keyword>
<keyword id="KW-0472">Membrane</keyword>
<keyword id="KW-1185">Reference proteome</keyword>
<keyword id="KW-0735">Signal-anchor</keyword>
<keyword id="KW-0746">Sphingolipid metabolism</keyword>
<keyword id="KW-0808">Transferase</keyword>
<keyword id="KW-0812">Transmembrane</keyword>
<keyword id="KW-1133">Transmembrane helix</keyword>
<reference key="1">
    <citation type="journal article" date="2005" name="Glycobiology">
        <title>The animal sialyltransferases and sialyltransferase-related genes: a phylogenetic approach.</title>
        <authorList>
            <person name="Harduin-Lepers A."/>
            <person name="Mollicone R."/>
            <person name="Delannoy P."/>
            <person name="Oriol R."/>
        </authorList>
    </citation>
    <scope>NUCLEOTIDE SEQUENCE [MRNA]</scope>
</reference>
<accession>Q6ZXD2</accession>
<feature type="chain" id="PRO_0000247930" description="Alpha-N-acetylneuraminide alpha-2,8-sialyltransferase">
    <location>
        <begin position="1"/>
        <end position="356"/>
    </location>
</feature>
<feature type="topological domain" description="Cytoplasmic" evidence="4">
    <location>
        <begin position="1"/>
        <end position="29"/>
    </location>
</feature>
<feature type="transmembrane region" description="Helical; Signal-anchor for type II membrane protein" evidence="4">
    <location>
        <begin position="30"/>
        <end position="48"/>
    </location>
</feature>
<feature type="topological domain" description="Lumenal" evidence="4">
    <location>
        <begin position="49"/>
        <end position="356"/>
    </location>
</feature>
<feature type="binding site" evidence="2">
    <location>
        <position position="143"/>
    </location>
    <ligand>
        <name>CMP-N-acetyl-beta-neuraminate</name>
        <dbReference type="ChEBI" id="CHEBI:57812"/>
    </ligand>
</feature>
<feature type="binding site" evidence="2">
    <location>
        <position position="166"/>
    </location>
    <ligand>
        <name>CMP-N-acetyl-beta-neuraminate</name>
        <dbReference type="ChEBI" id="CHEBI:57812"/>
    </ligand>
</feature>
<feature type="binding site" evidence="2">
    <location>
        <position position="274"/>
    </location>
    <ligand>
        <name>CMP-N-acetyl-beta-neuraminate</name>
        <dbReference type="ChEBI" id="CHEBI:57812"/>
    </ligand>
</feature>
<feature type="binding site" evidence="2">
    <location>
        <position position="275"/>
    </location>
    <ligand>
        <name>CMP-N-acetyl-beta-neuraminate</name>
        <dbReference type="ChEBI" id="CHEBI:57812"/>
    </ligand>
</feature>
<feature type="binding site" evidence="2">
    <location>
        <position position="276"/>
    </location>
    <ligand>
        <name>CMP-N-acetyl-beta-neuraminate</name>
        <dbReference type="ChEBI" id="CHEBI:57812"/>
    </ligand>
</feature>
<feature type="binding site" evidence="2">
    <location>
        <position position="296"/>
    </location>
    <ligand>
        <name>CMP-N-acetyl-beta-neuraminate</name>
        <dbReference type="ChEBI" id="CHEBI:57812"/>
    </ligand>
</feature>
<feature type="binding site" evidence="2">
    <location>
        <position position="310"/>
    </location>
    <ligand>
        <name>CMP-N-acetyl-beta-neuraminate</name>
        <dbReference type="ChEBI" id="CHEBI:57812"/>
    </ligand>
</feature>
<feature type="glycosylation site" description="N-linked (GlcNAc...) asparagine" evidence="4">
    <location>
        <position position="71"/>
    </location>
</feature>
<feature type="glycosylation site" description="N-linked (GlcNAc...) asparagine" evidence="4">
    <location>
        <position position="119"/>
    </location>
</feature>
<feature type="glycosylation site" description="N-linked (GlcNAc...) asparagine" evidence="4">
    <location>
        <position position="214"/>
    </location>
</feature>
<feature type="glycosylation site" description="N-linked (GlcNAc...) asparagine" evidence="4">
    <location>
        <position position="245"/>
    </location>
</feature>
<feature type="disulfide bond" evidence="1">
    <location>
        <begin position="138"/>
        <end position="287"/>
    </location>
</feature>
<evidence type="ECO:0000250" key="1"/>
<evidence type="ECO:0000250" key="2">
    <source>
        <dbReference type="UniProtKB" id="O43173"/>
    </source>
</evidence>
<evidence type="ECO:0000250" key="3">
    <source>
        <dbReference type="UniProtKB" id="Q92185"/>
    </source>
</evidence>
<evidence type="ECO:0000255" key="4"/>
<evidence type="ECO:0000305" key="5"/>
<gene>
    <name evidence="3" type="primary">ST8SIA1</name>
    <name type="synonym">SIAT8A</name>
</gene>